<accession>Q99ZK9</accession>
<accession>Q48YP9</accession>
<reference key="1">
    <citation type="journal article" date="2001" name="Proc. Natl. Acad. Sci. U.S.A.">
        <title>Complete genome sequence of an M1 strain of Streptococcus pyogenes.</title>
        <authorList>
            <person name="Ferretti J.J."/>
            <person name="McShan W.M."/>
            <person name="Ajdic D.J."/>
            <person name="Savic D.J."/>
            <person name="Savic G."/>
            <person name="Lyon K."/>
            <person name="Primeaux C."/>
            <person name="Sezate S."/>
            <person name="Suvorov A.N."/>
            <person name="Kenton S."/>
            <person name="Lai H.S."/>
            <person name="Lin S.P."/>
            <person name="Qian Y."/>
            <person name="Jia H.G."/>
            <person name="Najar F.Z."/>
            <person name="Ren Q."/>
            <person name="Zhu H."/>
            <person name="Song L."/>
            <person name="White J."/>
            <person name="Yuan X."/>
            <person name="Clifton S.W."/>
            <person name="Roe B.A."/>
            <person name="McLaughlin R.E."/>
        </authorList>
    </citation>
    <scope>NUCLEOTIDE SEQUENCE [LARGE SCALE GENOMIC DNA]</scope>
    <source>
        <strain>ATCC 700294 / SF370 / Serotype M1</strain>
    </source>
</reference>
<reference key="2">
    <citation type="journal article" date="2005" name="J. Infect. Dis.">
        <title>Evolutionary origin and emergence of a highly successful clone of serotype M1 group A Streptococcus involved multiple horizontal gene transfer events.</title>
        <authorList>
            <person name="Sumby P."/>
            <person name="Porcella S.F."/>
            <person name="Madrigal A.G."/>
            <person name="Barbian K.D."/>
            <person name="Virtaneva K."/>
            <person name="Ricklefs S.M."/>
            <person name="Sturdevant D.E."/>
            <person name="Graham M.R."/>
            <person name="Vuopio-Varkila J."/>
            <person name="Hoe N.P."/>
            <person name="Musser J.M."/>
        </authorList>
    </citation>
    <scope>NUCLEOTIDE SEQUENCE [LARGE SCALE GENOMIC DNA]</scope>
    <source>
        <strain>ATCC BAA-947 / MGAS5005 / Serotype M1</strain>
    </source>
</reference>
<dbReference type="EMBL" id="AE004092">
    <property type="protein sequence ID" value="AAK34051.1"/>
    <property type="molecule type" value="Genomic_DNA"/>
</dbReference>
<dbReference type="EMBL" id="CP000017">
    <property type="protein sequence ID" value="AAZ51523.1"/>
    <property type="molecule type" value="Genomic_DNA"/>
</dbReference>
<dbReference type="RefSeq" id="NP_269330.1">
    <property type="nucleotide sequence ID" value="NC_002737.2"/>
</dbReference>
<dbReference type="SMR" id="Q99ZK9"/>
<dbReference type="KEGG" id="spy:SPy_1186"/>
<dbReference type="KEGG" id="spz:M5005_Spy0905"/>
<dbReference type="PATRIC" id="fig|160490.10.peg.1037"/>
<dbReference type="HOGENOM" id="CLU_158489_0_0_9"/>
<dbReference type="OMA" id="YNWKEID"/>
<dbReference type="Proteomes" id="UP000000750">
    <property type="component" value="Chromosome"/>
</dbReference>
<dbReference type="GO" id="GO:0005737">
    <property type="term" value="C:cytoplasm"/>
    <property type="evidence" value="ECO:0007669"/>
    <property type="project" value="UniProtKB-SubCell"/>
</dbReference>
<dbReference type="HAMAP" id="MF_00805">
    <property type="entry name" value="CitD"/>
    <property type="match status" value="1"/>
</dbReference>
<dbReference type="InterPro" id="IPR006495">
    <property type="entry name" value="CitD"/>
</dbReference>
<dbReference type="InterPro" id="IPR023439">
    <property type="entry name" value="Mal_deCO2ase/Cit_lyase_ACP"/>
</dbReference>
<dbReference type="NCBIfam" id="TIGR01608">
    <property type="entry name" value="citD"/>
    <property type="match status" value="1"/>
</dbReference>
<dbReference type="NCBIfam" id="NF009726">
    <property type="entry name" value="PRK13253.1"/>
    <property type="match status" value="1"/>
</dbReference>
<dbReference type="Pfam" id="PF06857">
    <property type="entry name" value="ACP"/>
    <property type="match status" value="1"/>
</dbReference>
<dbReference type="PIRSF" id="PIRSF002736">
    <property type="entry name" value="Citrt_lyas_gamma"/>
    <property type="match status" value="1"/>
</dbReference>
<protein>
    <recommendedName>
        <fullName evidence="1">Citrate lyase acyl carrier protein</fullName>
    </recommendedName>
    <alternativeName>
        <fullName evidence="1">Citrate lyase gamma chain</fullName>
    </alternativeName>
</protein>
<evidence type="ECO:0000255" key="1">
    <source>
        <dbReference type="HAMAP-Rule" id="MF_00805"/>
    </source>
</evidence>
<sequence length="102" mass="11193">MDIKQTAVAGSLESSDLMITVSPNDEQTITITLDSSVEKQFGNHIRQLIHQTLVNLKVTAAKVEAVDKGALDCTIQARTIAAVHRAAGIDQYDWKEIDSWNV</sequence>
<feature type="chain" id="PRO_0000214713" description="Citrate lyase acyl carrier protein">
    <location>
        <begin position="1"/>
        <end position="102"/>
    </location>
</feature>
<feature type="modified residue" description="O-(phosphoribosyl dephospho-coenzyme A)serine" evidence="1">
    <location>
        <position position="14"/>
    </location>
</feature>
<gene>
    <name evidence="1" type="primary">citD</name>
    <name type="ordered locus">SPy_1186</name>
    <name type="ordered locus">M5005_Spy0905</name>
</gene>
<organism>
    <name type="scientific">Streptococcus pyogenes serotype M1</name>
    <dbReference type="NCBI Taxonomy" id="301447"/>
    <lineage>
        <taxon>Bacteria</taxon>
        <taxon>Bacillati</taxon>
        <taxon>Bacillota</taxon>
        <taxon>Bacilli</taxon>
        <taxon>Lactobacillales</taxon>
        <taxon>Streptococcaceae</taxon>
        <taxon>Streptococcus</taxon>
    </lineage>
</organism>
<proteinExistence type="inferred from homology"/>
<name>CITD_STRP1</name>
<comment type="function">
    <text evidence="1">Covalent carrier of the coenzyme of citrate lyase.</text>
</comment>
<comment type="subunit">
    <text evidence="1">Oligomer with a subunit composition of (alpha,beta,gamma)6.</text>
</comment>
<comment type="subcellular location">
    <subcellularLocation>
        <location evidence="1">Cytoplasm</location>
    </subcellularLocation>
</comment>
<comment type="similarity">
    <text evidence="1">Belongs to the CitD family.</text>
</comment>
<keyword id="KW-0963">Cytoplasm</keyword>
<keyword id="KW-0597">Phosphoprotein</keyword>
<keyword id="KW-1185">Reference proteome</keyword>